<sequence length="91" mass="9725">MIKPLGDRIVLSIDQPEEEKVGGILIANNAKEKPVMGSVVAISETSVGDSKAPKSVKVGDKVMFDKYAGSQVTIDGEDYLIVHEKDILGVL</sequence>
<name>CH10_OENOB</name>
<proteinExistence type="inferred from homology"/>
<organism>
    <name type="scientific">Oenococcus oeni (strain ATCC BAA-331 / PSU-1)</name>
    <dbReference type="NCBI Taxonomy" id="203123"/>
    <lineage>
        <taxon>Bacteria</taxon>
        <taxon>Bacillati</taxon>
        <taxon>Bacillota</taxon>
        <taxon>Bacilli</taxon>
        <taxon>Lactobacillales</taxon>
        <taxon>Lactobacillaceae</taxon>
        <taxon>Oenococcus</taxon>
    </lineage>
</organism>
<dbReference type="EMBL" id="CP000411">
    <property type="protein sequence ID" value="ABJ57259.1"/>
    <property type="molecule type" value="Genomic_DNA"/>
</dbReference>
<dbReference type="RefSeq" id="WP_002820779.1">
    <property type="nucleotide sequence ID" value="NC_008528.1"/>
</dbReference>
<dbReference type="SMR" id="Q04E63"/>
<dbReference type="STRING" id="203123.OEOE_1397"/>
<dbReference type="KEGG" id="ooe:OEOE_1397"/>
<dbReference type="eggNOG" id="COG0234">
    <property type="taxonomic scope" value="Bacteria"/>
</dbReference>
<dbReference type="HOGENOM" id="CLU_132825_2_1_9"/>
<dbReference type="Proteomes" id="UP000000774">
    <property type="component" value="Chromosome"/>
</dbReference>
<dbReference type="GO" id="GO:0005737">
    <property type="term" value="C:cytoplasm"/>
    <property type="evidence" value="ECO:0007669"/>
    <property type="project" value="UniProtKB-SubCell"/>
</dbReference>
<dbReference type="GO" id="GO:0005524">
    <property type="term" value="F:ATP binding"/>
    <property type="evidence" value="ECO:0007669"/>
    <property type="project" value="InterPro"/>
</dbReference>
<dbReference type="GO" id="GO:0046872">
    <property type="term" value="F:metal ion binding"/>
    <property type="evidence" value="ECO:0007669"/>
    <property type="project" value="TreeGrafter"/>
</dbReference>
<dbReference type="GO" id="GO:0044183">
    <property type="term" value="F:protein folding chaperone"/>
    <property type="evidence" value="ECO:0007669"/>
    <property type="project" value="InterPro"/>
</dbReference>
<dbReference type="GO" id="GO:0051087">
    <property type="term" value="F:protein-folding chaperone binding"/>
    <property type="evidence" value="ECO:0007669"/>
    <property type="project" value="TreeGrafter"/>
</dbReference>
<dbReference type="GO" id="GO:0051082">
    <property type="term" value="F:unfolded protein binding"/>
    <property type="evidence" value="ECO:0007669"/>
    <property type="project" value="TreeGrafter"/>
</dbReference>
<dbReference type="GO" id="GO:0051085">
    <property type="term" value="P:chaperone cofactor-dependent protein refolding"/>
    <property type="evidence" value="ECO:0007669"/>
    <property type="project" value="TreeGrafter"/>
</dbReference>
<dbReference type="CDD" id="cd00320">
    <property type="entry name" value="cpn10"/>
    <property type="match status" value="1"/>
</dbReference>
<dbReference type="FunFam" id="2.30.33.40:FF:000001">
    <property type="entry name" value="10 kDa chaperonin"/>
    <property type="match status" value="1"/>
</dbReference>
<dbReference type="Gene3D" id="2.30.33.40">
    <property type="entry name" value="GroES chaperonin"/>
    <property type="match status" value="1"/>
</dbReference>
<dbReference type="HAMAP" id="MF_00580">
    <property type="entry name" value="CH10"/>
    <property type="match status" value="1"/>
</dbReference>
<dbReference type="InterPro" id="IPR020818">
    <property type="entry name" value="Chaperonin_GroES"/>
</dbReference>
<dbReference type="InterPro" id="IPR037124">
    <property type="entry name" value="Chaperonin_GroES_sf"/>
</dbReference>
<dbReference type="InterPro" id="IPR018369">
    <property type="entry name" value="Chaprnonin_Cpn10_CS"/>
</dbReference>
<dbReference type="InterPro" id="IPR011032">
    <property type="entry name" value="GroES-like_sf"/>
</dbReference>
<dbReference type="NCBIfam" id="NF001531">
    <property type="entry name" value="PRK00364.2-2"/>
    <property type="match status" value="1"/>
</dbReference>
<dbReference type="PANTHER" id="PTHR10772">
    <property type="entry name" value="10 KDA HEAT SHOCK PROTEIN"/>
    <property type="match status" value="1"/>
</dbReference>
<dbReference type="PANTHER" id="PTHR10772:SF58">
    <property type="entry name" value="CO-CHAPERONIN GROES"/>
    <property type="match status" value="1"/>
</dbReference>
<dbReference type="Pfam" id="PF00166">
    <property type="entry name" value="Cpn10"/>
    <property type="match status" value="1"/>
</dbReference>
<dbReference type="PRINTS" id="PR00297">
    <property type="entry name" value="CHAPERONIN10"/>
</dbReference>
<dbReference type="SMART" id="SM00883">
    <property type="entry name" value="Cpn10"/>
    <property type="match status" value="1"/>
</dbReference>
<dbReference type="SUPFAM" id="SSF50129">
    <property type="entry name" value="GroES-like"/>
    <property type="match status" value="1"/>
</dbReference>
<dbReference type="PROSITE" id="PS00681">
    <property type="entry name" value="CHAPERONINS_CPN10"/>
    <property type="match status" value="1"/>
</dbReference>
<feature type="chain" id="PRO_1000025315" description="Co-chaperonin GroES">
    <location>
        <begin position="1"/>
        <end position="91"/>
    </location>
</feature>
<keyword id="KW-0143">Chaperone</keyword>
<keyword id="KW-0963">Cytoplasm</keyword>
<keyword id="KW-1185">Reference proteome</keyword>
<comment type="function">
    <text evidence="1">Together with the chaperonin GroEL, plays an essential role in assisting protein folding. The GroEL-GroES system forms a nano-cage that allows encapsulation of the non-native substrate proteins and provides a physical environment optimized to promote and accelerate protein folding. GroES binds to the apical surface of the GroEL ring, thereby capping the opening of the GroEL channel.</text>
</comment>
<comment type="subunit">
    <text evidence="1">Heptamer of 7 subunits arranged in a ring. Interacts with the chaperonin GroEL.</text>
</comment>
<comment type="subcellular location">
    <subcellularLocation>
        <location evidence="1">Cytoplasm</location>
    </subcellularLocation>
</comment>
<comment type="similarity">
    <text evidence="1">Belongs to the GroES chaperonin family.</text>
</comment>
<evidence type="ECO:0000255" key="1">
    <source>
        <dbReference type="HAMAP-Rule" id="MF_00580"/>
    </source>
</evidence>
<gene>
    <name evidence="1" type="primary">groES</name>
    <name evidence="1" type="synonym">groS</name>
    <name type="ordered locus">OEOE_1397</name>
</gene>
<reference key="1">
    <citation type="journal article" date="2006" name="Proc. Natl. Acad. Sci. U.S.A.">
        <title>Comparative genomics of the lactic acid bacteria.</title>
        <authorList>
            <person name="Makarova K.S."/>
            <person name="Slesarev A."/>
            <person name="Wolf Y.I."/>
            <person name="Sorokin A."/>
            <person name="Mirkin B."/>
            <person name="Koonin E.V."/>
            <person name="Pavlov A."/>
            <person name="Pavlova N."/>
            <person name="Karamychev V."/>
            <person name="Polouchine N."/>
            <person name="Shakhova V."/>
            <person name="Grigoriev I."/>
            <person name="Lou Y."/>
            <person name="Rohksar D."/>
            <person name="Lucas S."/>
            <person name="Huang K."/>
            <person name="Goodstein D.M."/>
            <person name="Hawkins T."/>
            <person name="Plengvidhya V."/>
            <person name="Welker D."/>
            <person name="Hughes J."/>
            <person name="Goh Y."/>
            <person name="Benson A."/>
            <person name="Baldwin K."/>
            <person name="Lee J.-H."/>
            <person name="Diaz-Muniz I."/>
            <person name="Dosti B."/>
            <person name="Smeianov V."/>
            <person name="Wechter W."/>
            <person name="Barabote R."/>
            <person name="Lorca G."/>
            <person name="Altermann E."/>
            <person name="Barrangou R."/>
            <person name="Ganesan B."/>
            <person name="Xie Y."/>
            <person name="Rawsthorne H."/>
            <person name="Tamir D."/>
            <person name="Parker C."/>
            <person name="Breidt F."/>
            <person name="Broadbent J.R."/>
            <person name="Hutkins R."/>
            <person name="O'Sullivan D."/>
            <person name="Steele J."/>
            <person name="Unlu G."/>
            <person name="Saier M.H. Jr."/>
            <person name="Klaenhammer T."/>
            <person name="Richardson P."/>
            <person name="Kozyavkin S."/>
            <person name="Weimer B.C."/>
            <person name="Mills D.A."/>
        </authorList>
    </citation>
    <scope>NUCLEOTIDE SEQUENCE [LARGE SCALE GENOMIC DNA]</scope>
    <source>
        <strain>ATCC BAA-331 / PSU-1</strain>
    </source>
</reference>
<protein>
    <recommendedName>
        <fullName evidence="1">Co-chaperonin GroES</fullName>
    </recommendedName>
    <alternativeName>
        <fullName evidence="1">10 kDa chaperonin</fullName>
    </alternativeName>
    <alternativeName>
        <fullName evidence="1">Chaperonin-10</fullName>
        <shortName evidence="1">Cpn10</shortName>
    </alternativeName>
</protein>
<accession>Q04E63</accession>